<reference key="1">
    <citation type="journal article" date="2011" name="MBio">
        <title>Novel metabolic attributes of the genus Cyanothece, comprising a group of unicellular nitrogen-fixing Cyanobacteria.</title>
        <authorList>
            <person name="Bandyopadhyay A."/>
            <person name="Elvitigala T."/>
            <person name="Welsh E."/>
            <person name="Stockel J."/>
            <person name="Liberton M."/>
            <person name="Min H."/>
            <person name="Sherman L.A."/>
            <person name="Pakrasi H.B."/>
        </authorList>
    </citation>
    <scope>NUCLEOTIDE SEQUENCE [LARGE SCALE GENOMIC DNA]</scope>
    <source>
        <strain>PCC 7424</strain>
    </source>
</reference>
<dbReference type="EMBL" id="CP001291">
    <property type="protein sequence ID" value="ACK71859.1"/>
    <property type="molecule type" value="Genomic_DNA"/>
</dbReference>
<dbReference type="RefSeq" id="WP_015955454.1">
    <property type="nucleotide sequence ID" value="NC_011729.1"/>
</dbReference>
<dbReference type="SMR" id="B7KFE3"/>
<dbReference type="STRING" id="65393.PCC7424_3466"/>
<dbReference type="KEGG" id="cyc:PCC7424_3466"/>
<dbReference type="eggNOG" id="COG0261">
    <property type="taxonomic scope" value="Bacteria"/>
</dbReference>
<dbReference type="HOGENOM" id="CLU_061463_1_2_3"/>
<dbReference type="OrthoDB" id="9813334at2"/>
<dbReference type="Proteomes" id="UP000002384">
    <property type="component" value="Chromosome"/>
</dbReference>
<dbReference type="GO" id="GO:0005737">
    <property type="term" value="C:cytoplasm"/>
    <property type="evidence" value="ECO:0007669"/>
    <property type="project" value="UniProtKB-ARBA"/>
</dbReference>
<dbReference type="GO" id="GO:1990904">
    <property type="term" value="C:ribonucleoprotein complex"/>
    <property type="evidence" value="ECO:0007669"/>
    <property type="project" value="UniProtKB-KW"/>
</dbReference>
<dbReference type="GO" id="GO:0005840">
    <property type="term" value="C:ribosome"/>
    <property type="evidence" value="ECO:0007669"/>
    <property type="project" value="UniProtKB-KW"/>
</dbReference>
<dbReference type="GO" id="GO:0019843">
    <property type="term" value="F:rRNA binding"/>
    <property type="evidence" value="ECO:0007669"/>
    <property type="project" value="UniProtKB-UniRule"/>
</dbReference>
<dbReference type="GO" id="GO:0003735">
    <property type="term" value="F:structural constituent of ribosome"/>
    <property type="evidence" value="ECO:0007669"/>
    <property type="project" value="InterPro"/>
</dbReference>
<dbReference type="GO" id="GO:0006412">
    <property type="term" value="P:translation"/>
    <property type="evidence" value="ECO:0007669"/>
    <property type="project" value="UniProtKB-UniRule"/>
</dbReference>
<dbReference type="HAMAP" id="MF_01363">
    <property type="entry name" value="Ribosomal_bL21"/>
    <property type="match status" value="1"/>
</dbReference>
<dbReference type="InterPro" id="IPR028909">
    <property type="entry name" value="bL21-like"/>
</dbReference>
<dbReference type="InterPro" id="IPR036164">
    <property type="entry name" value="bL21-like_sf"/>
</dbReference>
<dbReference type="InterPro" id="IPR001787">
    <property type="entry name" value="Ribosomal_bL21"/>
</dbReference>
<dbReference type="InterPro" id="IPR018258">
    <property type="entry name" value="Ribosomal_bL21_CS"/>
</dbReference>
<dbReference type="NCBIfam" id="TIGR00061">
    <property type="entry name" value="L21"/>
    <property type="match status" value="1"/>
</dbReference>
<dbReference type="PANTHER" id="PTHR21349">
    <property type="entry name" value="50S RIBOSOMAL PROTEIN L21"/>
    <property type="match status" value="1"/>
</dbReference>
<dbReference type="PANTHER" id="PTHR21349:SF0">
    <property type="entry name" value="LARGE RIBOSOMAL SUBUNIT PROTEIN BL21M"/>
    <property type="match status" value="1"/>
</dbReference>
<dbReference type="Pfam" id="PF00829">
    <property type="entry name" value="Ribosomal_L21p"/>
    <property type="match status" value="1"/>
</dbReference>
<dbReference type="SUPFAM" id="SSF141091">
    <property type="entry name" value="L21p-like"/>
    <property type="match status" value="1"/>
</dbReference>
<dbReference type="PROSITE" id="PS01169">
    <property type="entry name" value="RIBOSOMAL_L21"/>
    <property type="match status" value="1"/>
</dbReference>
<proteinExistence type="inferred from homology"/>
<organism>
    <name type="scientific">Gloeothece citriformis (strain PCC 7424)</name>
    <name type="common">Cyanothece sp. (strain PCC 7424)</name>
    <dbReference type="NCBI Taxonomy" id="65393"/>
    <lineage>
        <taxon>Bacteria</taxon>
        <taxon>Bacillati</taxon>
        <taxon>Cyanobacteriota</taxon>
        <taxon>Cyanophyceae</taxon>
        <taxon>Oscillatoriophycideae</taxon>
        <taxon>Chroococcales</taxon>
        <taxon>Aphanothecaceae</taxon>
        <taxon>Gloeothece</taxon>
        <taxon>Gloeothece citriformis</taxon>
    </lineage>
</organism>
<accession>B7KFE3</accession>
<evidence type="ECO:0000255" key="1">
    <source>
        <dbReference type="HAMAP-Rule" id="MF_01363"/>
    </source>
</evidence>
<evidence type="ECO:0000305" key="2"/>
<protein>
    <recommendedName>
        <fullName evidence="1">Large ribosomal subunit protein bL21</fullName>
    </recommendedName>
    <alternativeName>
        <fullName evidence="2">50S ribosomal protein L21</fullName>
    </alternativeName>
</protein>
<name>RL21_GLOC7</name>
<feature type="chain" id="PRO_1000143779" description="Large ribosomal subunit protein bL21">
    <location>
        <begin position="1"/>
        <end position="136"/>
    </location>
</feature>
<keyword id="KW-1185">Reference proteome</keyword>
<keyword id="KW-0687">Ribonucleoprotein</keyword>
<keyword id="KW-0689">Ribosomal protein</keyword>
<keyword id="KW-0694">RNA-binding</keyword>
<keyword id="KW-0699">rRNA-binding</keyword>
<sequence>MSYAIIETGGKQLKVQPGRFYDIELLHVDPETSHTIDKVLLVSHDNEVTVGQPFVEGATVEGTILRHFRGRKVIVYKMRPKKKTRKKRGHRQEITRFMVNAINFNGQVIGATENGTTTPTTANVEVATTEGSDSEE</sequence>
<gene>
    <name evidence="1" type="primary">rplU</name>
    <name evidence="1" type="synonym">rpl21</name>
    <name type="ordered locus">PCC7424_3466</name>
</gene>
<comment type="function">
    <text evidence="1">This protein binds to 23S rRNA in the presence of protein L20.</text>
</comment>
<comment type="subunit">
    <text evidence="1">Part of the 50S ribosomal subunit. Contacts protein L20.</text>
</comment>
<comment type="similarity">
    <text evidence="1">Belongs to the bacterial ribosomal protein bL21 family.</text>
</comment>